<accession>Q9M9T4</accession>
<accession>Q8L8R2</accession>
<reference key="1">
    <citation type="journal article" date="2000" name="Nature">
        <title>Sequence and analysis of chromosome 1 of the plant Arabidopsis thaliana.</title>
        <authorList>
            <person name="Theologis A."/>
            <person name="Ecker J.R."/>
            <person name="Palm C.J."/>
            <person name="Federspiel N.A."/>
            <person name="Kaul S."/>
            <person name="White O."/>
            <person name="Alonso J."/>
            <person name="Altafi H."/>
            <person name="Araujo R."/>
            <person name="Bowman C.L."/>
            <person name="Brooks S.Y."/>
            <person name="Buehler E."/>
            <person name="Chan A."/>
            <person name="Chao Q."/>
            <person name="Chen H."/>
            <person name="Cheuk R.F."/>
            <person name="Chin C.W."/>
            <person name="Chung M.K."/>
            <person name="Conn L."/>
            <person name="Conway A.B."/>
            <person name="Conway A.R."/>
            <person name="Creasy T.H."/>
            <person name="Dewar K."/>
            <person name="Dunn P."/>
            <person name="Etgu P."/>
            <person name="Feldblyum T.V."/>
            <person name="Feng J.-D."/>
            <person name="Fong B."/>
            <person name="Fujii C.Y."/>
            <person name="Gill J.E."/>
            <person name="Goldsmith A.D."/>
            <person name="Haas B."/>
            <person name="Hansen N.F."/>
            <person name="Hughes B."/>
            <person name="Huizar L."/>
            <person name="Hunter J.L."/>
            <person name="Jenkins J."/>
            <person name="Johnson-Hopson C."/>
            <person name="Khan S."/>
            <person name="Khaykin E."/>
            <person name="Kim C.J."/>
            <person name="Koo H.L."/>
            <person name="Kremenetskaia I."/>
            <person name="Kurtz D.B."/>
            <person name="Kwan A."/>
            <person name="Lam B."/>
            <person name="Langin-Hooper S."/>
            <person name="Lee A."/>
            <person name="Lee J.M."/>
            <person name="Lenz C.A."/>
            <person name="Li J.H."/>
            <person name="Li Y.-P."/>
            <person name="Lin X."/>
            <person name="Liu S.X."/>
            <person name="Liu Z.A."/>
            <person name="Luros J.S."/>
            <person name="Maiti R."/>
            <person name="Marziali A."/>
            <person name="Militscher J."/>
            <person name="Miranda M."/>
            <person name="Nguyen M."/>
            <person name="Nierman W.C."/>
            <person name="Osborne B.I."/>
            <person name="Pai G."/>
            <person name="Peterson J."/>
            <person name="Pham P.K."/>
            <person name="Rizzo M."/>
            <person name="Rooney T."/>
            <person name="Rowley D."/>
            <person name="Sakano H."/>
            <person name="Salzberg S.L."/>
            <person name="Schwartz J.R."/>
            <person name="Shinn P."/>
            <person name="Southwick A.M."/>
            <person name="Sun H."/>
            <person name="Tallon L.J."/>
            <person name="Tambunga G."/>
            <person name="Toriumi M.J."/>
            <person name="Town C.D."/>
            <person name="Utterback T."/>
            <person name="Van Aken S."/>
            <person name="Vaysberg M."/>
            <person name="Vysotskaia V.S."/>
            <person name="Walker M."/>
            <person name="Wu D."/>
            <person name="Yu G."/>
            <person name="Fraser C.M."/>
            <person name="Venter J.C."/>
            <person name="Davis R.W."/>
        </authorList>
    </citation>
    <scope>NUCLEOTIDE SEQUENCE [LARGE SCALE GENOMIC DNA]</scope>
    <source>
        <strain>cv. Columbia</strain>
    </source>
</reference>
<reference key="2">
    <citation type="journal article" date="2017" name="Plant J.">
        <title>Araport11: a complete reannotation of the Arabidopsis thaliana reference genome.</title>
        <authorList>
            <person name="Cheng C.Y."/>
            <person name="Krishnakumar V."/>
            <person name="Chan A.P."/>
            <person name="Thibaud-Nissen F."/>
            <person name="Schobel S."/>
            <person name="Town C.D."/>
        </authorList>
    </citation>
    <scope>GENOME REANNOTATION</scope>
    <source>
        <strain>cv. Columbia</strain>
    </source>
</reference>
<reference key="3">
    <citation type="submission" date="2002-03" db="EMBL/GenBank/DDBJ databases">
        <title>Full-length cDNA from Arabidopsis thaliana.</title>
        <authorList>
            <person name="Brover V.V."/>
            <person name="Troukhan M.E."/>
            <person name="Alexandrov N.A."/>
            <person name="Lu Y.-P."/>
            <person name="Flavell R.B."/>
            <person name="Feldmann K.A."/>
        </authorList>
    </citation>
    <scope>NUCLEOTIDE SEQUENCE [LARGE SCALE MRNA]</scope>
</reference>
<reference key="4">
    <citation type="journal article" date="2003" name="Science">
        <title>Empirical analysis of transcriptional activity in the Arabidopsis genome.</title>
        <authorList>
            <person name="Yamada K."/>
            <person name="Lim J."/>
            <person name="Dale J.M."/>
            <person name="Chen H."/>
            <person name="Shinn P."/>
            <person name="Palm C.J."/>
            <person name="Southwick A.M."/>
            <person name="Wu H.C."/>
            <person name="Kim C.J."/>
            <person name="Nguyen M."/>
            <person name="Pham P.K."/>
            <person name="Cheuk R.F."/>
            <person name="Karlin-Newmann G."/>
            <person name="Liu S.X."/>
            <person name="Lam B."/>
            <person name="Sakano H."/>
            <person name="Wu T."/>
            <person name="Yu G."/>
            <person name="Miranda M."/>
            <person name="Quach H.L."/>
            <person name="Tripp M."/>
            <person name="Chang C.H."/>
            <person name="Lee J.M."/>
            <person name="Toriumi M.J."/>
            <person name="Chan M.M."/>
            <person name="Tang C.C."/>
            <person name="Onodera C.S."/>
            <person name="Deng J.M."/>
            <person name="Akiyama K."/>
            <person name="Ansari Y."/>
            <person name="Arakawa T."/>
            <person name="Banh J."/>
            <person name="Banno F."/>
            <person name="Bowser L."/>
            <person name="Brooks S.Y."/>
            <person name="Carninci P."/>
            <person name="Chao Q."/>
            <person name="Choy N."/>
            <person name="Enju A."/>
            <person name="Goldsmith A.D."/>
            <person name="Gurjal M."/>
            <person name="Hansen N.F."/>
            <person name="Hayashizaki Y."/>
            <person name="Johnson-Hopson C."/>
            <person name="Hsuan V.W."/>
            <person name="Iida K."/>
            <person name="Karnes M."/>
            <person name="Khan S."/>
            <person name="Koesema E."/>
            <person name="Ishida J."/>
            <person name="Jiang P.X."/>
            <person name="Jones T."/>
            <person name="Kawai J."/>
            <person name="Kamiya A."/>
            <person name="Meyers C."/>
            <person name="Nakajima M."/>
            <person name="Narusaka M."/>
            <person name="Seki M."/>
            <person name="Sakurai T."/>
            <person name="Satou M."/>
            <person name="Tamse R."/>
            <person name="Vaysberg M."/>
            <person name="Wallender E.K."/>
            <person name="Wong C."/>
            <person name="Yamamura Y."/>
            <person name="Yuan S."/>
            <person name="Shinozaki K."/>
            <person name="Davis R.W."/>
            <person name="Theologis A."/>
            <person name="Ecker J.R."/>
        </authorList>
    </citation>
    <scope>NUCLEOTIDE SEQUENCE [LARGE SCALE MRNA]</scope>
    <source>
        <strain>cv. Columbia</strain>
    </source>
</reference>
<reference key="5">
    <citation type="journal article" date="2003" name="Plant Cell">
        <title>A growth regulatory loop that provides homeostasis to phytochrome a signaling.</title>
        <authorList>
            <person name="Lariguet P."/>
            <person name="Boccalandro H.E."/>
            <person name="Alonso J.M."/>
            <person name="Ecker J.R."/>
            <person name="Chory J."/>
            <person name="Casal J.J."/>
            <person name="Fankhauser C."/>
        </authorList>
    </citation>
    <scope>INDUCTION</scope>
    <scope>TISSUE SPECIFICITY</scope>
    <scope>DISRUPTION PHENOTYPE</scope>
</reference>
<reference key="6">
    <citation type="journal article" date="2005" name="J. Mol. Evol.">
        <title>Plant photoreceptors: phylogenetic overview.</title>
        <authorList>
            <person name="Lariguet P."/>
            <person name="Dunand C."/>
        </authorList>
    </citation>
    <scope>GENE FAMILY</scope>
    <scope>NOMENCLATURE</scope>
</reference>
<reference key="7">
    <citation type="journal article" date="2006" name="Proc. Natl. Acad. Sci. U.S.A.">
        <title>PHYTOCHROME KINASE SUBSTRATE 1 is a phototropin 1 binding protein required for phototropism.</title>
        <authorList>
            <person name="Lariguet P."/>
            <person name="Schepens I."/>
            <person name="Hodgson D."/>
            <person name="Pedmale U.V."/>
            <person name="Trevisan M."/>
            <person name="Kami C."/>
            <person name="de Carbonnel M."/>
            <person name="Alonso J.M."/>
            <person name="Ecker J.R."/>
            <person name="Liscum E."/>
            <person name="Fankhauser C."/>
        </authorList>
    </citation>
    <scope>FUNCTION</scope>
    <scope>INTERACTION WITH PKS1</scope>
    <scope>DISRUPTION PHENOTYPE</scope>
</reference>
<reference key="8">
    <citation type="journal article" date="2008" name="Plant Physiol.">
        <title>PHYTOCHROME KINASE SUBSTRATE1 regulates root phototropism and gravitropism.</title>
        <authorList>
            <person name="Boccalandro H.E."/>
            <person name="De Simone S.N."/>
            <person name="Bergmann-Honsberger A."/>
            <person name="Schepens I."/>
            <person name="Fankhauser C."/>
            <person name="Casal J.J."/>
        </authorList>
    </citation>
    <scope>DISRUPTION PHENOTYPE</scope>
</reference>
<reference key="9">
    <citation type="journal article" date="2009" name="Plant Physiol.">
        <title>Large-scale Arabidopsis phosphoproteome profiling reveals novel chloroplast kinase substrates and phosphorylation networks.</title>
        <authorList>
            <person name="Reiland S."/>
            <person name="Messerli G."/>
            <person name="Baerenfaller K."/>
            <person name="Gerrits B."/>
            <person name="Endler A."/>
            <person name="Grossmann J."/>
            <person name="Gruissem W."/>
            <person name="Baginsky S."/>
        </authorList>
    </citation>
    <scope>PHOSPHORYLATION [LARGE SCALE ANALYSIS] AT SER-239 AND SER-245</scope>
    <scope>IDENTIFICATION BY MASS SPECTROMETRY [LARGE SCALE ANALYSIS]</scope>
</reference>
<reference key="10">
    <citation type="journal article" date="2010" name="Plant Physiol.">
        <title>The Arabidopsis PHYTOCHROME KINASE SUBSTRATE2 protein is a phototropin signaling element that regulates leaf flattening and leaf positioning.</title>
        <authorList>
            <person name="de Carbonnel M."/>
            <person name="Davis P."/>
            <person name="Roelfsema M.R."/>
            <person name="Inoue S."/>
            <person name="Schepens I."/>
            <person name="Lariguet P."/>
            <person name="Geisler M."/>
            <person name="Shimazaki K."/>
            <person name="Hangarter R."/>
            <person name="Fankhauser C."/>
        </authorList>
    </citation>
    <scope>FUNCTION</scope>
    <scope>SUBCELLULAR LOCATION</scope>
    <scope>TISSUE SPECIFICITY</scope>
    <scope>INTERACTION WITH PKS1; RPT3; PHOT1 AND PHOT2</scope>
    <scope>DISRUPTION PHENOTYPE</scope>
</reference>
<evidence type="ECO:0000256" key="1">
    <source>
        <dbReference type="SAM" id="MobiDB-lite"/>
    </source>
</evidence>
<evidence type="ECO:0000269" key="2">
    <source>
    </source>
</evidence>
<evidence type="ECO:0000269" key="3">
    <source>
    </source>
</evidence>
<evidence type="ECO:0000269" key="4">
    <source>
    </source>
</evidence>
<evidence type="ECO:0000269" key="5">
    <source>
    </source>
</evidence>
<evidence type="ECO:0000305" key="6"/>
<evidence type="ECO:0007744" key="7">
    <source>
    </source>
</evidence>
<proteinExistence type="evidence at protein level"/>
<gene>
    <name type="primary">PKS2</name>
    <name type="ordered locus">At1g14280</name>
    <name type="ORF">F14L17.4</name>
</gene>
<comment type="function">
    <text evidence="3 5">Acts predominantly in the phot1 pathway. Involved in the leaf positioning and also in the phot2 pathway controlling the leaf flattening. Component of the network that modulates the very low-fluence response (VLFR) branch of phyA signaling. Regulates phytochrome-mediated photomorphogenesis and hypocotyl phototropism. May act by controlling auxin homeostasis.</text>
</comment>
<comment type="subunit">
    <text evidence="3 5">Interacts with PKS1, RPT3, PHOT1 and PHOT2.</text>
</comment>
<comment type="interaction">
    <interactant intactId="EBI-25512733">
        <id>Q9M9T4</id>
    </interactant>
    <interactant intactId="EBI-4426649">
        <id>Q17TI5</id>
        <label>BRX</label>
    </interactant>
    <organismsDiffer>false</organismsDiffer>
    <experiments>3</experiments>
</comment>
<comment type="interaction">
    <interactant intactId="EBI-25512733">
        <id>Q9M9T4</id>
    </interactant>
    <interactant intactId="EBI-15192297">
        <id>Q9LQF0</id>
        <label>TCP23</label>
    </interactant>
    <organismsDiffer>false</organismsDiffer>
    <experiments>3</experiments>
</comment>
<comment type="subcellular location">
    <subcellularLocation>
        <location evidence="5">Cell membrane</location>
        <topology evidence="5">Peripheral membrane protein</topology>
    </subcellularLocation>
</comment>
<comment type="tissue specificity">
    <text evidence="2 5">Expressed in leaves, with the strongest expression on edges of the laminas. Not found in roots.</text>
</comment>
<comment type="induction">
    <text evidence="2">Up-regulated by white light.</text>
</comment>
<comment type="disruption phenotype">
    <text evidence="2 3 4 5">Increased hypocotyl growth inhibition and cotyledon unfolding responses in the very low fluence response (VLFR) mode. Reduced phototropic response. Reduced hyponasty when grown under blue light. No effect on negative root phototropism. Auxin accumulation in protoplasts.</text>
</comment>
<comment type="miscellaneous">
    <text>PKS1, PKS2 and/or PKS4 are essential for phototropism but not for inhibition of gravitropism under long-term blue light irradiation.</text>
</comment>
<comment type="similarity">
    <text evidence="6">Belongs to the PKS family.</text>
</comment>
<sequence>MVTLTSSSSTPNVSFDFMMNNNNNSNNLYGPFSSSSTSFSYLTSKEDALTQKNLMSGITNDVLGINKKASEDLEISVFGAEKYFNGDMDSDHSPRLVSPLPDPEVPIERIFVGPKQSSKNSSETPSLRSESSWNSQSLLLQSKYVEKKKNIKKNSSCNSYFQEKDMSSNHKVSNKKSFLATLGCRCVCSNWSSVDVVDDKRRSSGLKKIKTQLSFSGDLSSEMKIHQQQQEAMLEQRKSLEIFGSPLIEKRIIQKKFPWEYSSSAKKEEHGFSVKYEEEEDGSVSDVSTDLFEIESLTGKANPFLARQGSSDPDSPDGYAPSEVSIQWSVVTASVADFSVMSECATSPVKKNRSFQIPRIPIMAKSNREIAPQRRKSSSSGLLMGCKSHKSVRVSGDSYTSMNRTPSYVPRFPVEANPTSTETRRRISSSSVSHTQSPFLYT</sequence>
<organism>
    <name type="scientific">Arabidopsis thaliana</name>
    <name type="common">Mouse-ear cress</name>
    <dbReference type="NCBI Taxonomy" id="3702"/>
    <lineage>
        <taxon>Eukaryota</taxon>
        <taxon>Viridiplantae</taxon>
        <taxon>Streptophyta</taxon>
        <taxon>Embryophyta</taxon>
        <taxon>Tracheophyta</taxon>
        <taxon>Spermatophyta</taxon>
        <taxon>Magnoliopsida</taxon>
        <taxon>eudicotyledons</taxon>
        <taxon>Gunneridae</taxon>
        <taxon>Pentapetalae</taxon>
        <taxon>rosids</taxon>
        <taxon>malvids</taxon>
        <taxon>Brassicales</taxon>
        <taxon>Brassicaceae</taxon>
        <taxon>Camelineae</taxon>
        <taxon>Arabidopsis</taxon>
    </lineage>
</organism>
<name>PKS2_ARATH</name>
<keyword id="KW-1003">Cell membrane</keyword>
<keyword id="KW-0472">Membrane</keyword>
<keyword id="KW-0597">Phosphoprotein</keyword>
<keyword id="KW-0607">Phytochrome signaling pathway</keyword>
<keyword id="KW-1185">Reference proteome</keyword>
<feature type="chain" id="PRO_0000393341" description="Protein PHYTOCHROME KINASE SUBSTRATE 2">
    <location>
        <begin position="1"/>
        <end position="442"/>
    </location>
</feature>
<feature type="region of interest" description="Disordered" evidence="1">
    <location>
        <begin position="110"/>
        <end position="130"/>
    </location>
</feature>
<feature type="region of interest" description="Disordered" evidence="1">
    <location>
        <begin position="394"/>
        <end position="442"/>
    </location>
</feature>
<feature type="compositionally biased region" description="Low complexity" evidence="1">
    <location>
        <begin position="121"/>
        <end position="130"/>
    </location>
</feature>
<feature type="compositionally biased region" description="Polar residues" evidence="1">
    <location>
        <begin position="397"/>
        <end position="406"/>
    </location>
</feature>
<feature type="compositionally biased region" description="Low complexity" evidence="1">
    <location>
        <begin position="428"/>
        <end position="442"/>
    </location>
</feature>
<feature type="modified residue" description="Phosphoserine" evidence="7">
    <location>
        <position position="239"/>
    </location>
</feature>
<feature type="modified residue" description="Phosphoserine" evidence="7">
    <location>
        <position position="245"/>
    </location>
</feature>
<feature type="sequence conflict" description="In Ref. 3; AAM67170." evidence="6" ref="3">
    <original>K</original>
    <variation>N</variation>
    <location>
        <position position="153"/>
    </location>
</feature>
<feature type="sequence conflict" description="In Ref. 3; AAM67170." evidence="6" ref="3">
    <original>N</original>
    <variation>K</variation>
    <location>
        <position position="302"/>
    </location>
</feature>
<protein>
    <recommendedName>
        <fullName>Protein PHYTOCHROME KINASE SUBSTRATE 2</fullName>
    </recommendedName>
</protein>
<dbReference type="EMBL" id="AC012188">
    <property type="protein sequence ID" value="AAF43927.1"/>
    <property type="molecule type" value="Genomic_DNA"/>
</dbReference>
<dbReference type="EMBL" id="CP002684">
    <property type="protein sequence ID" value="AEE29138.1"/>
    <property type="molecule type" value="Genomic_DNA"/>
</dbReference>
<dbReference type="EMBL" id="AY088864">
    <property type="protein sequence ID" value="AAM67170.1"/>
    <property type="molecule type" value="mRNA"/>
</dbReference>
<dbReference type="EMBL" id="AF334730">
    <property type="protein sequence ID" value="AAG50108.1"/>
    <property type="molecule type" value="mRNA"/>
</dbReference>
<dbReference type="EMBL" id="AY054676">
    <property type="protein sequence ID" value="AAK96867.1"/>
    <property type="molecule type" value="mRNA"/>
</dbReference>
<dbReference type="EMBL" id="AY081531">
    <property type="protein sequence ID" value="AAM10093.1"/>
    <property type="molecule type" value="mRNA"/>
</dbReference>
<dbReference type="PIR" id="H86276">
    <property type="entry name" value="H86276"/>
</dbReference>
<dbReference type="RefSeq" id="NP_172880.1">
    <property type="nucleotide sequence ID" value="NM_101294.3"/>
</dbReference>
<dbReference type="BioGRID" id="23229">
    <property type="interactions" value="5"/>
</dbReference>
<dbReference type="FunCoup" id="Q9M9T4">
    <property type="interactions" value="480"/>
</dbReference>
<dbReference type="IntAct" id="Q9M9T4">
    <property type="interactions" value="2"/>
</dbReference>
<dbReference type="STRING" id="3702.Q9M9T4"/>
<dbReference type="iPTMnet" id="Q9M9T4"/>
<dbReference type="PaxDb" id="3702-AT1G14280.1"/>
<dbReference type="ProteomicsDB" id="234767"/>
<dbReference type="EnsemblPlants" id="AT1G14280.1">
    <property type="protein sequence ID" value="AT1G14280.1"/>
    <property type="gene ID" value="AT1G14280"/>
</dbReference>
<dbReference type="GeneID" id="837989"/>
<dbReference type="Gramene" id="AT1G14280.1">
    <property type="protein sequence ID" value="AT1G14280.1"/>
    <property type="gene ID" value="AT1G14280"/>
</dbReference>
<dbReference type="KEGG" id="ath:AT1G14280"/>
<dbReference type="Araport" id="AT1G14280"/>
<dbReference type="TAIR" id="AT1G14280">
    <property type="gene designation" value="PKS2"/>
</dbReference>
<dbReference type="eggNOG" id="ENOG502QSBI">
    <property type="taxonomic scope" value="Eukaryota"/>
</dbReference>
<dbReference type="HOGENOM" id="CLU_048817_0_0_1"/>
<dbReference type="InParanoid" id="Q9M9T4"/>
<dbReference type="OMA" id="WDAIVPK"/>
<dbReference type="PhylomeDB" id="Q9M9T4"/>
<dbReference type="PRO" id="PR:Q9M9T4"/>
<dbReference type="Proteomes" id="UP000006548">
    <property type="component" value="Chromosome 1"/>
</dbReference>
<dbReference type="ExpressionAtlas" id="Q9M9T4">
    <property type="expression patterns" value="baseline and differential"/>
</dbReference>
<dbReference type="GO" id="GO:0005886">
    <property type="term" value="C:plasma membrane"/>
    <property type="evidence" value="ECO:0000314"/>
    <property type="project" value="TAIR"/>
</dbReference>
<dbReference type="GO" id="GO:0048366">
    <property type="term" value="P:leaf development"/>
    <property type="evidence" value="ECO:0000315"/>
    <property type="project" value="TAIR"/>
</dbReference>
<dbReference type="GO" id="GO:0009638">
    <property type="term" value="P:phototropism"/>
    <property type="evidence" value="ECO:0000316"/>
    <property type="project" value="TAIR"/>
</dbReference>
<dbReference type="GO" id="GO:0009585">
    <property type="term" value="P:red, far-red light phototransduction"/>
    <property type="evidence" value="ECO:0007669"/>
    <property type="project" value="UniProtKB-KW"/>
</dbReference>
<dbReference type="InterPro" id="IPR039615">
    <property type="entry name" value="PKS"/>
</dbReference>
<dbReference type="PANTHER" id="PTHR33781">
    <property type="entry name" value="PROTEIN PHYTOCHROME KINASE SUBSTRATE 1-RELATED"/>
    <property type="match status" value="1"/>
</dbReference>
<dbReference type="PANTHER" id="PTHR33781:SF20">
    <property type="entry name" value="PROTEIN PHYTOCHROME KINASE SUBSTRATE 2"/>
    <property type="match status" value="1"/>
</dbReference>